<sequence length="326" mass="35482">MSNAPGTSKFQIDLRRHLRAQNICDNLVHLMCEIAEASKYVINAVRTGDLGVAGTSNLYGEEQLALDVLSDRIMRKRLIHSGVVCNIASEEMDEIYQCQASADGLYSVAYDPLDGSSLVDVNLAVGTIVSIYAGCDLLQPGRNQVAAMYILYGPRVSLVYTVGDGVHEFTMNNLMEFTLTRENVKMAPEGNIYAPGGLRNKYNAGDEKFIRHLEEKGCKLRYSGGFVPDINQVLMKGKGLFMYPALNGSPNGKLRVLFELNPMAFIIEHAGGAASNGSIPILDIVPESLDQRAPIYIGCREDVKTATSFVNGGKQEVKMAGSFVNG</sequence>
<comment type="catalytic activity">
    <reaction evidence="1">
        <text>beta-D-fructose 1,6-bisphosphate + H2O = beta-D-fructose 6-phosphate + phosphate</text>
        <dbReference type="Rhea" id="RHEA:11064"/>
        <dbReference type="ChEBI" id="CHEBI:15377"/>
        <dbReference type="ChEBI" id="CHEBI:32966"/>
        <dbReference type="ChEBI" id="CHEBI:43474"/>
        <dbReference type="ChEBI" id="CHEBI:57634"/>
        <dbReference type="EC" id="3.1.3.11"/>
    </reaction>
</comment>
<comment type="cofactor">
    <cofactor evidence="1">
        <name>Mg(2+)</name>
        <dbReference type="ChEBI" id="CHEBI:18420"/>
    </cofactor>
    <text evidence="1">Binds 2 magnesium ions per subunit.</text>
</comment>
<comment type="pathway">
    <text evidence="1">Carbohydrate biosynthesis; gluconeogenesis.</text>
</comment>
<comment type="subunit">
    <text evidence="1">Homotetramer.</text>
</comment>
<comment type="subcellular location">
    <subcellularLocation>
        <location evidence="1">Cytoplasm</location>
    </subcellularLocation>
</comment>
<comment type="similarity">
    <text evidence="1">Belongs to the FBPase class 1 family.</text>
</comment>
<evidence type="ECO:0000255" key="1">
    <source>
        <dbReference type="HAMAP-Rule" id="MF_01855"/>
    </source>
</evidence>
<proteinExistence type="inferred from homology"/>
<organism>
    <name type="scientific">Citrifermentans bemidjiense (strain ATCC BAA-1014 / DSM 16622 / JCM 12645 / Bem)</name>
    <name type="common">Geobacter bemidjiensis</name>
    <dbReference type="NCBI Taxonomy" id="404380"/>
    <lineage>
        <taxon>Bacteria</taxon>
        <taxon>Pseudomonadati</taxon>
        <taxon>Thermodesulfobacteriota</taxon>
        <taxon>Desulfuromonadia</taxon>
        <taxon>Geobacterales</taxon>
        <taxon>Geobacteraceae</taxon>
        <taxon>Citrifermentans</taxon>
    </lineage>
</organism>
<gene>
    <name evidence="1" type="primary">fbp</name>
    <name type="ordered locus">Gbem_2410</name>
</gene>
<feature type="chain" id="PRO_0000364557" description="Fructose-1,6-bisphosphatase class 1">
    <location>
        <begin position="1"/>
        <end position="326"/>
    </location>
</feature>
<feature type="binding site" evidence="1">
    <location>
        <position position="90"/>
    </location>
    <ligand>
        <name>Mg(2+)</name>
        <dbReference type="ChEBI" id="CHEBI:18420"/>
        <label>1</label>
    </ligand>
</feature>
<feature type="binding site" evidence="1">
    <location>
        <position position="111"/>
    </location>
    <ligand>
        <name>Mg(2+)</name>
        <dbReference type="ChEBI" id="CHEBI:18420"/>
        <label>1</label>
    </ligand>
</feature>
<feature type="binding site" evidence="1">
    <location>
        <position position="111"/>
    </location>
    <ligand>
        <name>Mg(2+)</name>
        <dbReference type="ChEBI" id="CHEBI:18420"/>
        <label>2</label>
    </ligand>
</feature>
<feature type="binding site" evidence="1">
    <location>
        <position position="113"/>
    </location>
    <ligand>
        <name>Mg(2+)</name>
        <dbReference type="ChEBI" id="CHEBI:18420"/>
        <label>1</label>
    </ligand>
</feature>
<feature type="binding site" evidence="1">
    <location>
        <begin position="114"/>
        <end position="117"/>
    </location>
    <ligand>
        <name>substrate</name>
    </ligand>
</feature>
<feature type="binding site" evidence="1">
    <location>
        <position position="114"/>
    </location>
    <ligand>
        <name>Mg(2+)</name>
        <dbReference type="ChEBI" id="CHEBI:18420"/>
        <label>2</label>
    </ligand>
</feature>
<feature type="binding site" evidence="1">
    <location>
        <position position="222"/>
    </location>
    <ligand>
        <name>substrate</name>
    </ligand>
</feature>
<feature type="binding site" evidence="1">
    <location>
        <position position="253"/>
    </location>
    <ligand>
        <name>substrate</name>
    </ligand>
</feature>
<feature type="binding site" evidence="1">
    <location>
        <position position="259"/>
    </location>
    <ligand>
        <name>Mg(2+)</name>
        <dbReference type="ChEBI" id="CHEBI:18420"/>
        <label>2</label>
    </ligand>
</feature>
<reference key="1">
    <citation type="submission" date="2008-07" db="EMBL/GenBank/DDBJ databases">
        <title>Complete sequence of Geobacter bemidjiensis BEM.</title>
        <authorList>
            <consortium name="US DOE Joint Genome Institute"/>
            <person name="Lucas S."/>
            <person name="Copeland A."/>
            <person name="Lapidus A."/>
            <person name="Glavina del Rio T."/>
            <person name="Dalin E."/>
            <person name="Tice H."/>
            <person name="Bruce D."/>
            <person name="Goodwin L."/>
            <person name="Pitluck S."/>
            <person name="Kiss H."/>
            <person name="Brettin T."/>
            <person name="Detter J.C."/>
            <person name="Han C."/>
            <person name="Kuske C.R."/>
            <person name="Schmutz J."/>
            <person name="Larimer F."/>
            <person name="Land M."/>
            <person name="Hauser L."/>
            <person name="Kyrpides N."/>
            <person name="Lykidis A."/>
            <person name="Lovley D."/>
            <person name="Richardson P."/>
        </authorList>
    </citation>
    <scope>NUCLEOTIDE SEQUENCE [LARGE SCALE GENOMIC DNA]</scope>
    <source>
        <strain>ATCC BAA-1014 / DSM 16622 / JCM 12645 / Bem</strain>
    </source>
</reference>
<protein>
    <recommendedName>
        <fullName evidence="1">Fructose-1,6-bisphosphatase class 1</fullName>
        <shortName evidence="1">FBPase class 1</shortName>
        <ecNumber evidence="1">3.1.3.11</ecNumber>
    </recommendedName>
    <alternativeName>
        <fullName evidence="1">D-fructose-1,6-bisphosphate 1-phosphohydrolase class 1</fullName>
    </alternativeName>
</protein>
<name>F16PA_CITBB</name>
<accession>B5EFV5</accession>
<dbReference type="EC" id="3.1.3.11" evidence="1"/>
<dbReference type="EMBL" id="CP001124">
    <property type="protein sequence ID" value="ACH39420.1"/>
    <property type="molecule type" value="Genomic_DNA"/>
</dbReference>
<dbReference type="RefSeq" id="WP_012530842.1">
    <property type="nucleotide sequence ID" value="NC_011146.1"/>
</dbReference>
<dbReference type="SMR" id="B5EFV5"/>
<dbReference type="STRING" id="404380.Gbem_2410"/>
<dbReference type="KEGG" id="gbm:Gbem_2410"/>
<dbReference type="eggNOG" id="COG0158">
    <property type="taxonomic scope" value="Bacteria"/>
</dbReference>
<dbReference type="HOGENOM" id="CLU_039977_2_2_7"/>
<dbReference type="OrthoDB" id="9806756at2"/>
<dbReference type="UniPathway" id="UPA00138"/>
<dbReference type="Proteomes" id="UP000008825">
    <property type="component" value="Chromosome"/>
</dbReference>
<dbReference type="GO" id="GO:0005829">
    <property type="term" value="C:cytosol"/>
    <property type="evidence" value="ECO:0007669"/>
    <property type="project" value="TreeGrafter"/>
</dbReference>
<dbReference type="GO" id="GO:0042132">
    <property type="term" value="F:fructose 1,6-bisphosphate 1-phosphatase activity"/>
    <property type="evidence" value="ECO:0007669"/>
    <property type="project" value="UniProtKB-UniRule"/>
</dbReference>
<dbReference type="GO" id="GO:0000287">
    <property type="term" value="F:magnesium ion binding"/>
    <property type="evidence" value="ECO:0007669"/>
    <property type="project" value="UniProtKB-UniRule"/>
</dbReference>
<dbReference type="GO" id="GO:0030388">
    <property type="term" value="P:fructose 1,6-bisphosphate metabolic process"/>
    <property type="evidence" value="ECO:0007669"/>
    <property type="project" value="TreeGrafter"/>
</dbReference>
<dbReference type="GO" id="GO:0006002">
    <property type="term" value="P:fructose 6-phosphate metabolic process"/>
    <property type="evidence" value="ECO:0007669"/>
    <property type="project" value="TreeGrafter"/>
</dbReference>
<dbReference type="GO" id="GO:0006000">
    <property type="term" value="P:fructose metabolic process"/>
    <property type="evidence" value="ECO:0007669"/>
    <property type="project" value="TreeGrafter"/>
</dbReference>
<dbReference type="GO" id="GO:0006094">
    <property type="term" value="P:gluconeogenesis"/>
    <property type="evidence" value="ECO:0007669"/>
    <property type="project" value="UniProtKB-UniRule"/>
</dbReference>
<dbReference type="GO" id="GO:0005986">
    <property type="term" value="P:sucrose biosynthetic process"/>
    <property type="evidence" value="ECO:0007669"/>
    <property type="project" value="TreeGrafter"/>
</dbReference>
<dbReference type="CDD" id="cd00354">
    <property type="entry name" value="FBPase"/>
    <property type="match status" value="1"/>
</dbReference>
<dbReference type="Gene3D" id="3.40.190.80">
    <property type="match status" value="1"/>
</dbReference>
<dbReference type="Gene3D" id="3.30.540.10">
    <property type="entry name" value="Fructose-1,6-Bisphosphatase, subunit A, domain 1"/>
    <property type="match status" value="1"/>
</dbReference>
<dbReference type="HAMAP" id="MF_01855">
    <property type="entry name" value="FBPase_class1"/>
    <property type="match status" value="1"/>
</dbReference>
<dbReference type="InterPro" id="IPR044015">
    <property type="entry name" value="FBPase_C_dom"/>
</dbReference>
<dbReference type="InterPro" id="IPR000146">
    <property type="entry name" value="FBPase_class-1"/>
</dbReference>
<dbReference type="InterPro" id="IPR033391">
    <property type="entry name" value="FBPase_N"/>
</dbReference>
<dbReference type="InterPro" id="IPR028343">
    <property type="entry name" value="FBPtase"/>
</dbReference>
<dbReference type="InterPro" id="IPR020548">
    <property type="entry name" value="Fructose_bisphosphatase_AS"/>
</dbReference>
<dbReference type="InterPro" id="IPR023079">
    <property type="entry name" value="SBPase"/>
</dbReference>
<dbReference type="NCBIfam" id="NF006783">
    <property type="entry name" value="PRK09293.2-4"/>
    <property type="match status" value="1"/>
</dbReference>
<dbReference type="PANTHER" id="PTHR11556">
    <property type="entry name" value="FRUCTOSE-1,6-BISPHOSPHATASE-RELATED"/>
    <property type="match status" value="1"/>
</dbReference>
<dbReference type="PANTHER" id="PTHR11556:SF35">
    <property type="entry name" value="SEDOHEPTULOSE-1,7-BISPHOSPHATASE, CHLOROPLASTIC"/>
    <property type="match status" value="1"/>
</dbReference>
<dbReference type="Pfam" id="PF00316">
    <property type="entry name" value="FBPase"/>
    <property type="match status" value="1"/>
</dbReference>
<dbReference type="Pfam" id="PF18913">
    <property type="entry name" value="FBPase_C"/>
    <property type="match status" value="1"/>
</dbReference>
<dbReference type="PIRSF" id="PIRSF500210">
    <property type="entry name" value="FBPtase"/>
    <property type="match status" value="1"/>
</dbReference>
<dbReference type="PIRSF" id="PIRSF000904">
    <property type="entry name" value="FBPtase_SBPase"/>
    <property type="match status" value="1"/>
</dbReference>
<dbReference type="PRINTS" id="PR01958">
    <property type="entry name" value="S17BPHPHTASE"/>
</dbReference>
<dbReference type="SUPFAM" id="SSF56655">
    <property type="entry name" value="Carbohydrate phosphatase"/>
    <property type="match status" value="1"/>
</dbReference>
<dbReference type="PROSITE" id="PS00124">
    <property type="entry name" value="FBPASE"/>
    <property type="match status" value="1"/>
</dbReference>
<keyword id="KW-0119">Carbohydrate metabolism</keyword>
<keyword id="KW-0963">Cytoplasm</keyword>
<keyword id="KW-0378">Hydrolase</keyword>
<keyword id="KW-0460">Magnesium</keyword>
<keyword id="KW-0479">Metal-binding</keyword>
<keyword id="KW-1185">Reference proteome</keyword>